<feature type="signal peptide" evidence="2">
    <location>
        <begin position="1"/>
        <end position="20"/>
    </location>
</feature>
<feature type="chain" id="PRO_0000324687" description="External core antigen" evidence="2">
    <location>
        <begin position="21"/>
        <end position="217"/>
    </location>
</feature>
<feature type="propeptide" id="PRO_0000324688" evidence="1">
    <location>
        <begin position="190"/>
        <end position="217"/>
    </location>
</feature>
<feature type="repeat" description="1; half-length">
    <location>
        <begin position="190"/>
        <end position="196"/>
    </location>
</feature>
<feature type="repeat" description="2">
    <location>
        <begin position="197"/>
        <end position="204"/>
    </location>
</feature>
<feature type="repeat" description="3">
    <location>
        <begin position="205"/>
        <end position="211"/>
    </location>
</feature>
<feature type="region of interest" description="HBEAG" evidence="2">
    <location>
        <begin position="26"/>
        <end position="28"/>
    </location>
</feature>
<feature type="region of interest" description="Disordered" evidence="3">
    <location>
        <begin position="181"/>
        <end position="217"/>
    </location>
</feature>
<feature type="region of interest" description="3 X 8 AA approximate repeats of S-P-R-R-R-R-[PS]-Q">
    <location>
        <begin position="190"/>
        <end position="211"/>
    </location>
</feature>
<feature type="compositionally biased region" description="Basic residues" evidence="3">
    <location>
        <begin position="181"/>
        <end position="210"/>
    </location>
</feature>
<feature type="site" description="Cleavage; by host" evidence="2">
    <location>
        <begin position="189"/>
        <end position="190"/>
    </location>
</feature>
<feature type="disulfide bond" description="Interchain" evidence="2">
    <location>
        <position position="78"/>
    </location>
</feature>
<feature type="disulfide bond" description="Interchain" evidence="2">
    <location>
        <position position="91"/>
    </location>
</feature>
<keyword id="KW-0024">Alternative initiation</keyword>
<keyword id="KW-1015">Disulfide bond</keyword>
<keyword id="KW-1048">Host nucleus</keyword>
<keyword id="KW-0945">Host-virus interaction</keyword>
<keyword id="KW-0677">Repeat</keyword>
<keyword id="KW-0964">Secreted</keyword>
<keyword id="KW-0732">Signal</keyword>
<keyword id="KW-0899">Viral immunoevasion</keyword>
<evidence type="ECO:0000250" key="1"/>
<evidence type="ECO:0000255" key="2">
    <source>
        <dbReference type="HAMAP-Rule" id="MF_04076"/>
    </source>
</evidence>
<evidence type="ECO:0000256" key="3">
    <source>
        <dbReference type="SAM" id="MobiDB-lite"/>
    </source>
</evidence>
<organismHost>
    <name type="scientific">Urocitellus parryii kennicottii</name>
    <dbReference type="NCBI Taxonomy" id="259022"/>
</organismHost>
<organism>
    <name type="scientific">Arctic squirrel hepatitis virus</name>
    <name type="common">ASHV</name>
    <dbReference type="NCBI Taxonomy" id="41952"/>
    <lineage>
        <taxon>Viruses</taxon>
        <taxon>Riboviria</taxon>
        <taxon>Pararnavirae</taxon>
        <taxon>Artverviricota</taxon>
        <taxon>Revtraviricetes</taxon>
        <taxon>Blubervirales</taxon>
        <taxon>Hepadnaviridae</taxon>
        <taxon>Orthohepadnavirus</taxon>
        <taxon>Ground squirrel hepatitis virus (strain 27)</taxon>
    </lineage>
</organism>
<proteinExistence type="inferred from homology"/>
<accession>Q64896</accession>
<protein>
    <recommendedName>
        <fullName evidence="2">External core antigen</fullName>
    </recommendedName>
    <alternativeName>
        <fullName evidence="2">HBeAg</fullName>
    </alternativeName>
    <alternativeName>
        <fullName evidence="2">Precore protein</fullName>
    </alternativeName>
    <alternativeName>
        <fullName evidence="2">p25</fullName>
    </alternativeName>
</protein>
<comment type="function">
    <text evidence="2">May regulate immune response to the intracellular capsid in acting as a T-cell tolerogen, by having an immunoregulatory effect which prevents destruction of infected cells by cytotoxic T-cells. This immune regulation may predispose to chronicity during perinatal infections and prevent severe liver injury during adult infections.</text>
</comment>
<comment type="subunit">
    <text evidence="2">Homodimerizes.</text>
</comment>
<comment type="subcellular location">
    <subcellularLocation>
        <location evidence="2">Secreted</location>
    </subcellularLocation>
    <subcellularLocation>
        <location evidence="2">Host nucleus</location>
    </subcellularLocation>
</comment>
<comment type="alternative products">
    <event type="alternative initiation"/>
    <isoform>
        <id>Q64896-1</id>
        <name>External core antigen</name>
        <sequence type="displayed"/>
    </isoform>
    <isoform>
        <id>Q64897-1</id>
        <name>Capsid protein</name>
        <sequence type="external"/>
    </isoform>
</comment>
<comment type="PTM">
    <text evidence="2">Phosphorylated.</text>
</comment>
<comment type="PTM">
    <text evidence="2">Cleaved by host furin.</text>
</comment>
<comment type="similarity">
    <text evidence="2">Belongs to the orthohepadnavirus precore antigen family.</text>
</comment>
<dbReference type="EMBL" id="U29144">
    <property type="protein sequence ID" value="AAB08030.1"/>
    <property type="molecule type" value="Genomic_DNA"/>
</dbReference>
<dbReference type="SMR" id="Q64896"/>
<dbReference type="Proteomes" id="UP000008172">
    <property type="component" value="Genome"/>
</dbReference>
<dbReference type="GO" id="GO:0005576">
    <property type="term" value="C:extracellular region"/>
    <property type="evidence" value="ECO:0007669"/>
    <property type="project" value="UniProtKB-SubCell"/>
</dbReference>
<dbReference type="GO" id="GO:0043657">
    <property type="term" value="C:host cell"/>
    <property type="evidence" value="ECO:0007669"/>
    <property type="project" value="GOC"/>
</dbReference>
<dbReference type="GO" id="GO:0030430">
    <property type="term" value="C:host cell cytoplasm"/>
    <property type="evidence" value="ECO:0007669"/>
    <property type="project" value="UniProtKB-UniRule"/>
</dbReference>
<dbReference type="GO" id="GO:0042025">
    <property type="term" value="C:host cell nucleus"/>
    <property type="evidence" value="ECO:0007669"/>
    <property type="project" value="UniProtKB-SubCell"/>
</dbReference>
<dbReference type="GO" id="GO:0039619">
    <property type="term" value="C:T=4 icosahedral viral capsid"/>
    <property type="evidence" value="ECO:0007669"/>
    <property type="project" value="UniProtKB-UniRule"/>
</dbReference>
<dbReference type="GO" id="GO:0003677">
    <property type="term" value="F:DNA binding"/>
    <property type="evidence" value="ECO:0007669"/>
    <property type="project" value="UniProtKB-UniRule"/>
</dbReference>
<dbReference type="GO" id="GO:0003723">
    <property type="term" value="F:RNA binding"/>
    <property type="evidence" value="ECO:0007669"/>
    <property type="project" value="UniProtKB-UniRule"/>
</dbReference>
<dbReference type="GO" id="GO:0005198">
    <property type="term" value="F:structural molecule activity"/>
    <property type="evidence" value="ECO:0007669"/>
    <property type="project" value="UniProtKB-UniRule"/>
</dbReference>
<dbReference type="GO" id="GO:0075521">
    <property type="term" value="P:microtubule-dependent intracellular transport of viral material towards nucleus"/>
    <property type="evidence" value="ECO:0007669"/>
    <property type="project" value="UniProtKB-UniRule"/>
</dbReference>
<dbReference type="GO" id="GO:0046718">
    <property type="term" value="P:symbiont entry into host cell"/>
    <property type="evidence" value="ECO:0007669"/>
    <property type="project" value="UniProtKB-UniRule"/>
</dbReference>
<dbReference type="GO" id="GO:0075732">
    <property type="term" value="P:viral penetration into host nucleus"/>
    <property type="evidence" value="ECO:0007669"/>
    <property type="project" value="UniProtKB-UniRule"/>
</dbReference>
<dbReference type="Gene3D" id="1.10.4090.10">
    <property type="entry name" value="Viral capsid, core domain supefamily, Hepatitis B virus"/>
    <property type="match status" value="1"/>
</dbReference>
<dbReference type="HAMAP" id="MF_04076">
    <property type="entry name" value="HBV_HBEAG"/>
    <property type="match status" value="1"/>
</dbReference>
<dbReference type="InterPro" id="IPR013195">
    <property type="entry name" value="Hepatitis_B_virus_capsid_N"/>
</dbReference>
<dbReference type="InterPro" id="IPR002006">
    <property type="entry name" value="Hepatitis_core"/>
</dbReference>
<dbReference type="InterPro" id="IPR036459">
    <property type="entry name" value="Viral_capsid_core_dom_sf_HBV"/>
</dbReference>
<dbReference type="Pfam" id="PF08290">
    <property type="entry name" value="Hep_core_N"/>
    <property type="match status" value="1"/>
</dbReference>
<dbReference type="Pfam" id="PF00906">
    <property type="entry name" value="Hepatitis_core"/>
    <property type="match status" value="2"/>
</dbReference>
<dbReference type="SUPFAM" id="SSF47852">
    <property type="entry name" value="Hepatitis B viral capsid (hbcag)"/>
    <property type="match status" value="1"/>
</dbReference>
<reference key="1">
    <citation type="journal article" date="1996" name="J. Virol.">
        <title>A new hepadnavirus endemic in arctic ground squirrels in Alaska.</title>
        <authorList>
            <person name="Testut P."/>
            <person name="Renard C.A."/>
            <person name="Terradillos O."/>
            <person name="Vitvitski-Trepo L."/>
            <person name="Tekaia F."/>
            <person name="Degott C."/>
            <person name="Blake J."/>
            <person name="Boyer B."/>
            <person name="Buendia M.A."/>
        </authorList>
    </citation>
    <scope>NUCLEOTIDE SEQUENCE [GENOMIC DNA]</scope>
</reference>
<sequence length="217" mass="25097">MYLFHLCLVFACVSCPTVQASKLCLGWLWDMDIDPYKEFGSSYQLLNFLPLDFFPELNALVDTATALYEEELTGREHCSPHHTAIRQALVCWEELTRLIAWMSANINSEEVRRVIVAHVNDTWGLKVRQNLWFHLSCLTFGQHTVQEFLVSFGVRIRTPAPYRPPNAPILSTLPEHTVIRRRGSARVVRSPRRRTPSPRRRRSQSPRRRPQSPASNC</sequence>
<gene>
    <name evidence="2" type="primary">C</name>
</gene>
<name>HBEAG_ASHV</name>